<sequence>MKPNYRIFSIVTAVSLVIDQATKILVDRTLELYQSIPVVPGLFSITYMRNKGAAFSFLSNFDYRRPFFIAVTLVAMAAIAITFRKLRDDQRLAAVSLSLIFSGAVGNLIDRVRLGEVIDFLDVYWKTHHWPAFNVADSAICVGVALLALDMIRDERRQSKDN</sequence>
<keyword id="KW-0064">Aspartyl protease</keyword>
<keyword id="KW-0997">Cell inner membrane</keyword>
<keyword id="KW-1003">Cell membrane</keyword>
<keyword id="KW-0378">Hydrolase</keyword>
<keyword id="KW-0472">Membrane</keyword>
<keyword id="KW-0645">Protease</keyword>
<keyword id="KW-1185">Reference proteome</keyword>
<keyword id="KW-0812">Transmembrane</keyword>
<keyword id="KW-1133">Transmembrane helix</keyword>
<proteinExistence type="inferred from homology"/>
<name>LSPA_GEOMG</name>
<organism>
    <name type="scientific">Geobacter metallireducens (strain ATCC 53774 / DSM 7210 / GS-15)</name>
    <dbReference type="NCBI Taxonomy" id="269799"/>
    <lineage>
        <taxon>Bacteria</taxon>
        <taxon>Pseudomonadati</taxon>
        <taxon>Thermodesulfobacteriota</taxon>
        <taxon>Desulfuromonadia</taxon>
        <taxon>Geobacterales</taxon>
        <taxon>Geobacteraceae</taxon>
        <taxon>Geobacter</taxon>
    </lineage>
</organism>
<evidence type="ECO:0000255" key="1">
    <source>
        <dbReference type="HAMAP-Rule" id="MF_00161"/>
    </source>
</evidence>
<dbReference type="EC" id="3.4.23.36" evidence="1"/>
<dbReference type="EMBL" id="CP000148">
    <property type="protein sequence ID" value="ABB30595.1"/>
    <property type="molecule type" value="Genomic_DNA"/>
</dbReference>
<dbReference type="RefSeq" id="WP_004512323.1">
    <property type="nucleotide sequence ID" value="NC_007517.1"/>
</dbReference>
<dbReference type="SMR" id="Q39YS9"/>
<dbReference type="STRING" id="269799.Gmet_0352"/>
<dbReference type="KEGG" id="gme:Gmet_0352"/>
<dbReference type="eggNOG" id="COG0597">
    <property type="taxonomic scope" value="Bacteria"/>
</dbReference>
<dbReference type="HOGENOM" id="CLU_083252_4_0_7"/>
<dbReference type="UniPathway" id="UPA00665"/>
<dbReference type="Proteomes" id="UP000007073">
    <property type="component" value="Chromosome"/>
</dbReference>
<dbReference type="GO" id="GO:0005886">
    <property type="term" value="C:plasma membrane"/>
    <property type="evidence" value="ECO:0007669"/>
    <property type="project" value="UniProtKB-SubCell"/>
</dbReference>
<dbReference type="GO" id="GO:0004190">
    <property type="term" value="F:aspartic-type endopeptidase activity"/>
    <property type="evidence" value="ECO:0007669"/>
    <property type="project" value="UniProtKB-UniRule"/>
</dbReference>
<dbReference type="GO" id="GO:0006508">
    <property type="term" value="P:proteolysis"/>
    <property type="evidence" value="ECO:0007669"/>
    <property type="project" value="UniProtKB-KW"/>
</dbReference>
<dbReference type="HAMAP" id="MF_00161">
    <property type="entry name" value="LspA"/>
    <property type="match status" value="1"/>
</dbReference>
<dbReference type="InterPro" id="IPR001872">
    <property type="entry name" value="Peptidase_A8"/>
</dbReference>
<dbReference type="NCBIfam" id="TIGR00077">
    <property type="entry name" value="lspA"/>
    <property type="match status" value="1"/>
</dbReference>
<dbReference type="PANTHER" id="PTHR33695">
    <property type="entry name" value="LIPOPROTEIN SIGNAL PEPTIDASE"/>
    <property type="match status" value="1"/>
</dbReference>
<dbReference type="PANTHER" id="PTHR33695:SF1">
    <property type="entry name" value="LIPOPROTEIN SIGNAL PEPTIDASE"/>
    <property type="match status" value="1"/>
</dbReference>
<dbReference type="Pfam" id="PF01252">
    <property type="entry name" value="Peptidase_A8"/>
    <property type="match status" value="1"/>
</dbReference>
<dbReference type="PRINTS" id="PR00781">
    <property type="entry name" value="LIPOSIGPTASE"/>
</dbReference>
<dbReference type="PROSITE" id="PS00855">
    <property type="entry name" value="SPASE_II"/>
    <property type="match status" value="1"/>
</dbReference>
<accession>Q39YS9</accession>
<feature type="chain" id="PRO_0000289386" description="Lipoprotein signal peptidase">
    <location>
        <begin position="1"/>
        <end position="162"/>
    </location>
</feature>
<feature type="transmembrane region" description="Helical" evidence="1">
    <location>
        <begin position="66"/>
        <end position="86"/>
    </location>
</feature>
<feature type="transmembrane region" description="Helical" evidence="1">
    <location>
        <begin position="92"/>
        <end position="112"/>
    </location>
</feature>
<feature type="transmembrane region" description="Helical" evidence="1">
    <location>
        <begin position="132"/>
        <end position="152"/>
    </location>
</feature>
<feature type="active site" evidence="1">
    <location>
        <position position="119"/>
    </location>
</feature>
<feature type="active site" evidence="1">
    <location>
        <position position="137"/>
    </location>
</feature>
<protein>
    <recommendedName>
        <fullName evidence="1">Lipoprotein signal peptidase</fullName>
        <ecNumber evidence="1">3.4.23.36</ecNumber>
    </recommendedName>
    <alternativeName>
        <fullName evidence="1">Prolipoprotein signal peptidase</fullName>
    </alternativeName>
    <alternativeName>
        <fullName evidence="1">Signal peptidase II</fullName>
        <shortName evidence="1">SPase II</shortName>
    </alternativeName>
</protein>
<comment type="function">
    <text evidence="1">This protein specifically catalyzes the removal of signal peptides from prolipoproteins.</text>
</comment>
<comment type="catalytic activity">
    <reaction evidence="1">
        <text>Release of signal peptides from bacterial membrane prolipoproteins. Hydrolyzes -Xaa-Yaa-Zaa-|-(S,diacylglyceryl)Cys-, in which Xaa is hydrophobic (preferably Leu), and Yaa (Ala or Ser) and Zaa (Gly or Ala) have small, neutral side chains.</text>
        <dbReference type="EC" id="3.4.23.36"/>
    </reaction>
</comment>
<comment type="pathway">
    <text evidence="1">Protein modification; lipoprotein biosynthesis (signal peptide cleavage).</text>
</comment>
<comment type="subcellular location">
    <subcellularLocation>
        <location evidence="1">Cell inner membrane</location>
        <topology evidence="1">Multi-pass membrane protein</topology>
    </subcellularLocation>
</comment>
<comment type="similarity">
    <text evidence="1">Belongs to the peptidase A8 family.</text>
</comment>
<gene>
    <name evidence="1" type="primary">lspA</name>
    <name type="ordered locus">Gmet_0352</name>
</gene>
<reference key="1">
    <citation type="journal article" date="2009" name="BMC Microbiol.">
        <title>The genome sequence of Geobacter metallireducens: features of metabolism, physiology and regulation common and dissimilar to Geobacter sulfurreducens.</title>
        <authorList>
            <person name="Aklujkar M."/>
            <person name="Krushkal J."/>
            <person name="DiBartolo G."/>
            <person name="Lapidus A."/>
            <person name="Land M.L."/>
            <person name="Lovley D.R."/>
        </authorList>
    </citation>
    <scope>NUCLEOTIDE SEQUENCE [LARGE SCALE GENOMIC DNA]</scope>
    <source>
        <strain>ATCC 53774 / DSM 7210 / GS-15</strain>
    </source>
</reference>